<evidence type="ECO:0000250" key="1"/>
<evidence type="ECO:0000255" key="2"/>
<evidence type="ECO:0000255" key="3">
    <source>
        <dbReference type="PROSITE-ProRule" id="PRU00114"/>
    </source>
</evidence>
<evidence type="ECO:0000269" key="4">
    <source>
    </source>
</evidence>
<evidence type="ECO:0000269" key="5">
    <source>
    </source>
</evidence>
<evidence type="ECO:0000305" key="6"/>
<reference key="1">
    <citation type="journal article" date="2006" name="J. Immunol.">
        <title>Molecular and functional characterization of CD300b, a new activating immunoglobulin receptor able to transduce signals through two different pathways.</title>
        <authorList>
            <person name="Martinez-Barriocanal A."/>
            <person name="Sayos J."/>
        </authorList>
    </citation>
    <scope>NUCLEOTIDE SEQUENCE [MRNA]</scope>
    <scope>FUNCTION</scope>
    <scope>TISSUE SPECIFICITY</scope>
    <scope>PHOSPHORYLATION AT TYR-188</scope>
    <scope>MUTAGENESIS OF LYS-158 AND TYR-188</scope>
    <scope>INTERACTION WITH TYROBP</scope>
</reference>
<reference key="2">
    <citation type="submission" date="2001-10" db="EMBL/GenBank/DDBJ databases">
        <title>Triggering receptor expressed on myeloid cells 5.</title>
        <authorList>
            <person name="Colonna M."/>
        </authorList>
    </citation>
    <scope>NUCLEOTIDE SEQUENCE [MRNA]</scope>
</reference>
<reference key="3">
    <citation type="journal article" date="2003" name="Genome Res.">
        <title>The secreted protein discovery initiative (SPDI), a large-scale effort to identify novel human secreted and transmembrane proteins: a bioinformatics assessment.</title>
        <authorList>
            <person name="Clark H.F."/>
            <person name="Gurney A.L."/>
            <person name="Abaya E."/>
            <person name="Baker K."/>
            <person name="Baldwin D.T."/>
            <person name="Brush J."/>
            <person name="Chen J."/>
            <person name="Chow B."/>
            <person name="Chui C."/>
            <person name="Crowley C."/>
            <person name="Currell B."/>
            <person name="Deuel B."/>
            <person name="Dowd P."/>
            <person name="Eaton D."/>
            <person name="Foster J.S."/>
            <person name="Grimaldi C."/>
            <person name="Gu Q."/>
            <person name="Hass P.E."/>
            <person name="Heldens S."/>
            <person name="Huang A."/>
            <person name="Kim H.S."/>
            <person name="Klimowski L."/>
            <person name="Jin Y."/>
            <person name="Johnson S."/>
            <person name="Lee J."/>
            <person name="Lewis L."/>
            <person name="Liao D."/>
            <person name="Mark M.R."/>
            <person name="Robbie E."/>
            <person name="Sanchez C."/>
            <person name="Schoenfeld J."/>
            <person name="Seshagiri S."/>
            <person name="Simmons L."/>
            <person name="Singh J."/>
            <person name="Smith V."/>
            <person name="Stinson J."/>
            <person name="Vagts A."/>
            <person name="Vandlen R.L."/>
            <person name="Watanabe C."/>
            <person name="Wieand D."/>
            <person name="Woods K."/>
            <person name="Xie M.-H."/>
            <person name="Yansura D.G."/>
            <person name="Yi S."/>
            <person name="Yu G."/>
            <person name="Yuan J."/>
            <person name="Zhang M."/>
            <person name="Zhang Z."/>
            <person name="Goddard A.D."/>
            <person name="Wood W.I."/>
            <person name="Godowski P.J."/>
            <person name="Gray A.M."/>
        </authorList>
    </citation>
    <scope>NUCLEOTIDE SEQUENCE [LARGE SCALE MRNA]</scope>
</reference>
<reference key="4">
    <citation type="journal article" date="2004" name="Nat. Genet.">
        <title>Complete sequencing and characterization of 21,243 full-length human cDNAs.</title>
        <authorList>
            <person name="Ota T."/>
            <person name="Suzuki Y."/>
            <person name="Nishikawa T."/>
            <person name="Otsuki T."/>
            <person name="Sugiyama T."/>
            <person name="Irie R."/>
            <person name="Wakamatsu A."/>
            <person name="Hayashi K."/>
            <person name="Sato H."/>
            <person name="Nagai K."/>
            <person name="Kimura K."/>
            <person name="Makita H."/>
            <person name="Sekine M."/>
            <person name="Obayashi M."/>
            <person name="Nishi T."/>
            <person name="Shibahara T."/>
            <person name="Tanaka T."/>
            <person name="Ishii S."/>
            <person name="Yamamoto J."/>
            <person name="Saito K."/>
            <person name="Kawai Y."/>
            <person name="Isono Y."/>
            <person name="Nakamura Y."/>
            <person name="Nagahari K."/>
            <person name="Murakami K."/>
            <person name="Yasuda T."/>
            <person name="Iwayanagi T."/>
            <person name="Wagatsuma M."/>
            <person name="Shiratori A."/>
            <person name="Sudo H."/>
            <person name="Hosoiri T."/>
            <person name="Kaku Y."/>
            <person name="Kodaira H."/>
            <person name="Kondo H."/>
            <person name="Sugawara M."/>
            <person name="Takahashi M."/>
            <person name="Kanda K."/>
            <person name="Yokoi T."/>
            <person name="Furuya T."/>
            <person name="Kikkawa E."/>
            <person name="Omura Y."/>
            <person name="Abe K."/>
            <person name="Kamihara K."/>
            <person name="Katsuta N."/>
            <person name="Sato K."/>
            <person name="Tanikawa M."/>
            <person name="Yamazaki M."/>
            <person name="Ninomiya K."/>
            <person name="Ishibashi T."/>
            <person name="Yamashita H."/>
            <person name="Murakawa K."/>
            <person name="Fujimori K."/>
            <person name="Tanai H."/>
            <person name="Kimata M."/>
            <person name="Watanabe M."/>
            <person name="Hiraoka S."/>
            <person name="Chiba Y."/>
            <person name="Ishida S."/>
            <person name="Ono Y."/>
            <person name="Takiguchi S."/>
            <person name="Watanabe S."/>
            <person name="Yosida M."/>
            <person name="Hotuta T."/>
            <person name="Kusano J."/>
            <person name="Kanehori K."/>
            <person name="Takahashi-Fujii A."/>
            <person name="Hara H."/>
            <person name="Tanase T.-O."/>
            <person name="Nomura Y."/>
            <person name="Togiya S."/>
            <person name="Komai F."/>
            <person name="Hara R."/>
            <person name="Takeuchi K."/>
            <person name="Arita M."/>
            <person name="Imose N."/>
            <person name="Musashino K."/>
            <person name="Yuuki H."/>
            <person name="Oshima A."/>
            <person name="Sasaki N."/>
            <person name="Aotsuka S."/>
            <person name="Yoshikawa Y."/>
            <person name="Matsunawa H."/>
            <person name="Ichihara T."/>
            <person name="Shiohata N."/>
            <person name="Sano S."/>
            <person name="Moriya S."/>
            <person name="Momiyama H."/>
            <person name="Satoh N."/>
            <person name="Takami S."/>
            <person name="Terashima Y."/>
            <person name="Suzuki O."/>
            <person name="Nakagawa S."/>
            <person name="Senoh A."/>
            <person name="Mizoguchi H."/>
            <person name="Goto Y."/>
            <person name="Shimizu F."/>
            <person name="Wakebe H."/>
            <person name="Hishigaki H."/>
            <person name="Watanabe T."/>
            <person name="Sugiyama A."/>
            <person name="Takemoto M."/>
            <person name="Kawakami B."/>
            <person name="Yamazaki M."/>
            <person name="Watanabe K."/>
            <person name="Kumagai A."/>
            <person name="Itakura S."/>
            <person name="Fukuzumi Y."/>
            <person name="Fujimori Y."/>
            <person name="Komiyama M."/>
            <person name="Tashiro H."/>
            <person name="Tanigami A."/>
            <person name="Fujiwara T."/>
            <person name="Ono T."/>
            <person name="Yamada K."/>
            <person name="Fujii Y."/>
            <person name="Ozaki K."/>
            <person name="Hirao M."/>
            <person name="Ohmori Y."/>
            <person name="Kawabata A."/>
            <person name="Hikiji T."/>
            <person name="Kobatake N."/>
            <person name="Inagaki H."/>
            <person name="Ikema Y."/>
            <person name="Okamoto S."/>
            <person name="Okitani R."/>
            <person name="Kawakami T."/>
            <person name="Noguchi S."/>
            <person name="Itoh T."/>
            <person name="Shigeta K."/>
            <person name="Senba T."/>
            <person name="Matsumura K."/>
            <person name="Nakajima Y."/>
            <person name="Mizuno T."/>
            <person name="Morinaga M."/>
            <person name="Sasaki M."/>
            <person name="Togashi T."/>
            <person name="Oyama M."/>
            <person name="Hata H."/>
            <person name="Watanabe M."/>
            <person name="Komatsu T."/>
            <person name="Mizushima-Sugano J."/>
            <person name="Satoh T."/>
            <person name="Shirai Y."/>
            <person name="Takahashi Y."/>
            <person name="Nakagawa K."/>
            <person name="Okumura K."/>
            <person name="Nagase T."/>
            <person name="Nomura N."/>
            <person name="Kikuchi H."/>
            <person name="Masuho Y."/>
            <person name="Yamashita R."/>
            <person name="Nakai K."/>
            <person name="Yada T."/>
            <person name="Nakamura Y."/>
            <person name="Ohara O."/>
            <person name="Isogai T."/>
            <person name="Sugano S."/>
        </authorList>
    </citation>
    <scope>NUCLEOTIDE SEQUENCE [LARGE SCALE MRNA]</scope>
</reference>
<reference key="5">
    <citation type="journal article" date="2006" name="Nature">
        <title>DNA sequence of human chromosome 17 and analysis of rearrangement in the human lineage.</title>
        <authorList>
            <person name="Zody M.C."/>
            <person name="Garber M."/>
            <person name="Adams D.J."/>
            <person name="Sharpe T."/>
            <person name="Harrow J."/>
            <person name="Lupski J.R."/>
            <person name="Nicholson C."/>
            <person name="Searle S.M."/>
            <person name="Wilming L."/>
            <person name="Young S.K."/>
            <person name="Abouelleil A."/>
            <person name="Allen N.R."/>
            <person name="Bi W."/>
            <person name="Bloom T."/>
            <person name="Borowsky M.L."/>
            <person name="Bugalter B.E."/>
            <person name="Butler J."/>
            <person name="Chang J.L."/>
            <person name="Chen C.-K."/>
            <person name="Cook A."/>
            <person name="Corum B."/>
            <person name="Cuomo C.A."/>
            <person name="de Jong P.J."/>
            <person name="DeCaprio D."/>
            <person name="Dewar K."/>
            <person name="FitzGerald M."/>
            <person name="Gilbert J."/>
            <person name="Gibson R."/>
            <person name="Gnerre S."/>
            <person name="Goldstein S."/>
            <person name="Grafham D.V."/>
            <person name="Grocock R."/>
            <person name="Hafez N."/>
            <person name="Hagopian D.S."/>
            <person name="Hart E."/>
            <person name="Norman C.H."/>
            <person name="Humphray S."/>
            <person name="Jaffe D.B."/>
            <person name="Jones M."/>
            <person name="Kamal M."/>
            <person name="Khodiyar V.K."/>
            <person name="LaButti K."/>
            <person name="Laird G."/>
            <person name="Lehoczky J."/>
            <person name="Liu X."/>
            <person name="Lokyitsang T."/>
            <person name="Loveland J."/>
            <person name="Lui A."/>
            <person name="Macdonald P."/>
            <person name="Major J.E."/>
            <person name="Matthews L."/>
            <person name="Mauceli E."/>
            <person name="McCarroll S.A."/>
            <person name="Mihalev A.H."/>
            <person name="Mudge J."/>
            <person name="Nguyen C."/>
            <person name="Nicol R."/>
            <person name="O'Leary S.B."/>
            <person name="Osoegawa K."/>
            <person name="Schwartz D.C."/>
            <person name="Shaw-Smith C."/>
            <person name="Stankiewicz P."/>
            <person name="Steward C."/>
            <person name="Swarbreck D."/>
            <person name="Venkataraman V."/>
            <person name="Whittaker C.A."/>
            <person name="Yang X."/>
            <person name="Zimmer A.R."/>
            <person name="Bradley A."/>
            <person name="Hubbard T."/>
            <person name="Birren B.W."/>
            <person name="Rogers J."/>
            <person name="Lander E.S."/>
            <person name="Nusbaum C."/>
        </authorList>
    </citation>
    <scope>NUCLEOTIDE SEQUENCE [LARGE SCALE GENOMIC DNA]</scope>
</reference>
<reference key="6">
    <citation type="submission" date="2005-07" db="EMBL/GenBank/DDBJ databases">
        <authorList>
            <person name="Mural R.J."/>
            <person name="Istrail S."/>
            <person name="Sutton G.G."/>
            <person name="Florea L."/>
            <person name="Halpern A.L."/>
            <person name="Mobarry C.M."/>
            <person name="Lippert R."/>
            <person name="Walenz B."/>
            <person name="Shatkay H."/>
            <person name="Dew I."/>
            <person name="Miller J.R."/>
            <person name="Flanigan M.J."/>
            <person name="Edwards N.J."/>
            <person name="Bolanos R."/>
            <person name="Fasulo D."/>
            <person name="Halldorsson B.V."/>
            <person name="Hannenhalli S."/>
            <person name="Turner R."/>
            <person name="Yooseph S."/>
            <person name="Lu F."/>
            <person name="Nusskern D.R."/>
            <person name="Shue B.C."/>
            <person name="Zheng X.H."/>
            <person name="Zhong F."/>
            <person name="Delcher A.L."/>
            <person name="Huson D.H."/>
            <person name="Kravitz S.A."/>
            <person name="Mouchard L."/>
            <person name="Reinert K."/>
            <person name="Remington K.A."/>
            <person name="Clark A.G."/>
            <person name="Waterman M.S."/>
            <person name="Eichler E.E."/>
            <person name="Adams M.D."/>
            <person name="Hunkapiller M.W."/>
            <person name="Myers E.W."/>
            <person name="Venter J.C."/>
        </authorList>
    </citation>
    <scope>NUCLEOTIDE SEQUENCE [LARGE SCALE GENOMIC DNA]</scope>
</reference>
<reference key="7">
    <citation type="journal article" date="2004" name="Genome Res.">
        <title>The status, quality, and expansion of the NIH full-length cDNA project: the Mammalian Gene Collection (MGC).</title>
        <authorList>
            <consortium name="The MGC Project Team"/>
        </authorList>
    </citation>
    <scope>NUCLEOTIDE SEQUENCE [LARGE SCALE MRNA]</scope>
    <source>
        <tissue>Blood</tissue>
    </source>
</reference>
<reference key="8">
    <citation type="journal article" date="2003" name="Hum. Genet.">
        <title>Novel immunoglobulin superfamily gene cluster, mapping to a region of human chromosome 17q25, linked to psoriasis susceptibility.</title>
        <authorList>
            <person name="Speckman R.A."/>
            <person name="Wright Daw J.A."/>
            <person name="Helms C."/>
            <person name="Duan S."/>
            <person name="Cao L."/>
            <person name="Taillon-Miller P."/>
            <person name="Kwok P.Y."/>
            <person name="Menter A."/>
            <person name="Bowcock A.M."/>
        </authorList>
    </citation>
    <scope>IDENTIFICATION</scope>
</reference>
<reference key="9">
    <citation type="journal article" date="2008" name="Blood">
        <title>Analysis of mouse LMIR5/CLM-7 as an activating receptor: differential regulation of LMIR5/CLM-7 in mouse versus human cells.</title>
        <authorList>
            <person name="Yamanishi Y."/>
            <person name="Kitaura J."/>
            <person name="Izawa K."/>
            <person name="Matsuoka T."/>
            <person name="Oki T."/>
            <person name="Lu Y."/>
            <person name="Shibata F."/>
            <person name="Yamazaki S."/>
            <person name="Kumagai H."/>
            <person name="Nakajima H."/>
            <person name="Maeda-Yamamoto M."/>
            <person name="Tybulewicz V.L.J."/>
            <person name="Takai T."/>
            <person name="Kitamura T."/>
        </authorList>
    </citation>
    <scope>PHOSPHORYLATION AT TYR-188</scope>
    <scope>INTERACTION WITH TYROBP</scope>
    <scope>FUNCTION</scope>
</reference>
<sequence>MWLPPALLLLSLSGCFSIQGPESVRAPEQGSLTVQCHYKQGWETYIKWWCRGVRWDTCKILIETRGSEQGEKSDRVSIKDNQKDRTFTVTMEGLRRDDADVYWCGIERRGPDLGTQVKVIVDPEGAASTTASSPTNSNMAVFIGSHKRNHYMLLVFVKVPILLILVTAILWLKGSQRVPEEPGEQPIYMNFSEPLTKDMAT</sequence>
<dbReference type="EMBL" id="AY646929">
    <property type="protein sequence ID" value="AAV69612.1"/>
    <property type="molecule type" value="mRNA"/>
</dbReference>
<dbReference type="EMBL" id="AF427618">
    <property type="protein sequence ID" value="AAN86133.1"/>
    <property type="molecule type" value="mRNA"/>
</dbReference>
<dbReference type="EMBL" id="AY359025">
    <property type="protein sequence ID" value="AAQ89384.1"/>
    <property type="molecule type" value="mRNA"/>
</dbReference>
<dbReference type="EMBL" id="AK290925">
    <property type="protein sequence ID" value="BAF83614.1"/>
    <property type="status" value="ALT_INIT"/>
    <property type="molecule type" value="mRNA"/>
</dbReference>
<dbReference type="EMBL" id="AC079325">
    <property type="status" value="NOT_ANNOTATED_CDS"/>
    <property type="molecule type" value="Genomic_DNA"/>
</dbReference>
<dbReference type="EMBL" id="CH471099">
    <property type="protein sequence ID" value="EAW89170.1"/>
    <property type="status" value="ALT_INIT"/>
    <property type="molecule type" value="Genomic_DNA"/>
</dbReference>
<dbReference type="EMBL" id="BC028091">
    <property type="protein sequence ID" value="AAH28091.1"/>
    <property type="status" value="ALT_INIT"/>
    <property type="molecule type" value="mRNA"/>
</dbReference>
<dbReference type="CCDS" id="CCDS11700.2"/>
<dbReference type="RefSeq" id="NP_777552.3">
    <property type="nucleotide sequence ID" value="NM_174892.4"/>
</dbReference>
<dbReference type="SMR" id="A8K4G0"/>
<dbReference type="BioGRID" id="125877">
    <property type="interactions" value="6"/>
</dbReference>
<dbReference type="FunCoup" id="A8K4G0">
    <property type="interactions" value="826"/>
</dbReference>
<dbReference type="IntAct" id="A8K4G0">
    <property type="interactions" value="9"/>
</dbReference>
<dbReference type="STRING" id="9606.ENSP00000376397"/>
<dbReference type="iPTMnet" id="A8K4G0"/>
<dbReference type="PhosphoSitePlus" id="A8K4G0"/>
<dbReference type="BioMuta" id="CD300LB"/>
<dbReference type="MassIVE" id="A8K4G0"/>
<dbReference type="PaxDb" id="9606-ENSP00000376397"/>
<dbReference type="PeptideAtlas" id="A8K4G0"/>
<dbReference type="Antibodypedia" id="53132">
    <property type="antibodies" value="110 antibodies from 22 providers"/>
</dbReference>
<dbReference type="DNASU" id="124599"/>
<dbReference type="Ensembl" id="ENST00000392621.6">
    <property type="protein sequence ID" value="ENSP00000376397.2"/>
    <property type="gene ID" value="ENSG00000178789.10"/>
</dbReference>
<dbReference type="Ensembl" id="ENST00000709208.1">
    <property type="protein sequence ID" value="ENSP00000517556.1"/>
    <property type="gene ID" value="ENSG00000291919.1"/>
</dbReference>
<dbReference type="Ensembl" id="ENST00000718280.1">
    <property type="protein sequence ID" value="ENSP00000520719.1"/>
    <property type="gene ID" value="ENSG00000178789.10"/>
</dbReference>
<dbReference type="GeneID" id="124599"/>
<dbReference type="KEGG" id="hsa:124599"/>
<dbReference type="MANE-Select" id="ENST00000392621.6">
    <property type="protein sequence ID" value="ENSP00000376397.2"/>
    <property type="RefSeq nucleotide sequence ID" value="NM_174892.4"/>
    <property type="RefSeq protein sequence ID" value="NP_777552.3"/>
</dbReference>
<dbReference type="UCSC" id="uc002jkx.4">
    <property type="organism name" value="human"/>
</dbReference>
<dbReference type="AGR" id="HGNC:30811"/>
<dbReference type="CTD" id="124599"/>
<dbReference type="DisGeNET" id="124599"/>
<dbReference type="GeneCards" id="CD300LB"/>
<dbReference type="HGNC" id="HGNC:30811">
    <property type="gene designation" value="CD300LB"/>
</dbReference>
<dbReference type="HPA" id="ENSG00000178789">
    <property type="expression patterns" value="Tissue enhanced (bone marrow, lymphoid tissue)"/>
</dbReference>
<dbReference type="MIM" id="610705">
    <property type="type" value="gene"/>
</dbReference>
<dbReference type="neXtProt" id="NX_A8K4G0"/>
<dbReference type="OpenTargets" id="ENSG00000178789"/>
<dbReference type="PharmGKB" id="PA142672151"/>
<dbReference type="VEuPathDB" id="HostDB:ENSG00000178789"/>
<dbReference type="eggNOG" id="ENOG502S7MA">
    <property type="taxonomic scope" value="Eukaryota"/>
</dbReference>
<dbReference type="GeneTree" id="ENSGT00940000162729"/>
<dbReference type="HOGENOM" id="CLU_051023_3_1_1"/>
<dbReference type="InParanoid" id="A8K4G0"/>
<dbReference type="OMA" id="EPGDQPI"/>
<dbReference type="OrthoDB" id="8920197at2759"/>
<dbReference type="PAN-GO" id="A8K4G0">
    <property type="GO annotations" value="2 GO annotations based on evolutionary models"/>
</dbReference>
<dbReference type="PhylomeDB" id="A8K4G0"/>
<dbReference type="TreeFam" id="TF334441"/>
<dbReference type="PathwayCommons" id="A8K4G0"/>
<dbReference type="Reactome" id="R-HSA-198933">
    <property type="pathway name" value="Immunoregulatory interactions between a Lymphoid and a non-Lymphoid cell"/>
</dbReference>
<dbReference type="Reactome" id="R-HSA-2172127">
    <property type="pathway name" value="DAP12 interactions"/>
</dbReference>
<dbReference type="SignaLink" id="A8K4G0"/>
<dbReference type="SIGNOR" id="A8K4G0"/>
<dbReference type="BioGRID-ORCS" id="124599">
    <property type="hits" value="7 hits in 330 CRISPR screens"/>
</dbReference>
<dbReference type="ChiTaRS" id="CD300LB">
    <property type="organism name" value="human"/>
</dbReference>
<dbReference type="GenomeRNAi" id="124599"/>
<dbReference type="Pharos" id="A8K4G0">
    <property type="development level" value="Tbio"/>
</dbReference>
<dbReference type="PRO" id="PR:A8K4G0"/>
<dbReference type="Proteomes" id="UP000005640">
    <property type="component" value="Chromosome 17"/>
</dbReference>
<dbReference type="RNAct" id="A8K4G0">
    <property type="molecule type" value="protein"/>
</dbReference>
<dbReference type="Bgee" id="ENSG00000178789">
    <property type="expression patterns" value="Expressed in monocyte and 108 other cell types or tissues"/>
</dbReference>
<dbReference type="ExpressionAtlas" id="A8K4G0">
    <property type="expression patterns" value="baseline and differential"/>
</dbReference>
<dbReference type="GO" id="GO:0005886">
    <property type="term" value="C:plasma membrane"/>
    <property type="evidence" value="ECO:0000318"/>
    <property type="project" value="GO_Central"/>
</dbReference>
<dbReference type="GO" id="GO:0042802">
    <property type="term" value="F:identical protein binding"/>
    <property type="evidence" value="ECO:0000353"/>
    <property type="project" value="IntAct"/>
</dbReference>
<dbReference type="GO" id="GO:0004888">
    <property type="term" value="F:transmembrane signaling receptor activity"/>
    <property type="evidence" value="ECO:0000318"/>
    <property type="project" value="GO_Central"/>
</dbReference>
<dbReference type="GO" id="GO:0002757">
    <property type="term" value="P:immune response-activating signaling pathway"/>
    <property type="evidence" value="ECO:0000318"/>
    <property type="project" value="GO_Central"/>
</dbReference>
<dbReference type="CDD" id="cd05716">
    <property type="entry name" value="IgV_pIgR_like"/>
    <property type="match status" value="1"/>
</dbReference>
<dbReference type="FunFam" id="2.60.40.10:FF:000370">
    <property type="entry name" value="CMRF35-like molecule 1"/>
    <property type="match status" value="1"/>
</dbReference>
<dbReference type="Gene3D" id="2.60.40.10">
    <property type="entry name" value="Immunoglobulins"/>
    <property type="match status" value="1"/>
</dbReference>
<dbReference type="InterPro" id="IPR050671">
    <property type="entry name" value="CD300_family_receptors"/>
</dbReference>
<dbReference type="InterPro" id="IPR007110">
    <property type="entry name" value="Ig-like_dom"/>
</dbReference>
<dbReference type="InterPro" id="IPR036179">
    <property type="entry name" value="Ig-like_dom_sf"/>
</dbReference>
<dbReference type="InterPro" id="IPR013783">
    <property type="entry name" value="Ig-like_fold"/>
</dbReference>
<dbReference type="InterPro" id="IPR003599">
    <property type="entry name" value="Ig_sub"/>
</dbReference>
<dbReference type="InterPro" id="IPR013106">
    <property type="entry name" value="Ig_V-set"/>
</dbReference>
<dbReference type="PANTHER" id="PTHR11860:SF103">
    <property type="entry name" value="CMRF35-LIKE MOLECULE 7"/>
    <property type="match status" value="1"/>
</dbReference>
<dbReference type="PANTHER" id="PTHR11860">
    <property type="entry name" value="POLYMERIC-IMMUNOGLOBULIN RECEPTOR"/>
    <property type="match status" value="1"/>
</dbReference>
<dbReference type="Pfam" id="PF07686">
    <property type="entry name" value="V-set"/>
    <property type="match status" value="1"/>
</dbReference>
<dbReference type="SMART" id="SM00409">
    <property type="entry name" value="IG"/>
    <property type="match status" value="1"/>
</dbReference>
<dbReference type="SUPFAM" id="SSF48726">
    <property type="entry name" value="Immunoglobulin"/>
    <property type="match status" value="1"/>
</dbReference>
<dbReference type="PROSITE" id="PS50835">
    <property type="entry name" value="IG_LIKE"/>
    <property type="match status" value="1"/>
</dbReference>
<comment type="function">
    <text evidence="4 5">Acts as an activating immune receptor through its interaction with ITAM-bearing adapter TYROBP, and also independently by recruitment of GRB2.</text>
</comment>
<comment type="subunit">
    <text evidence="4 5">Interacts with TYROBP, which enhances cell surface expression and activation properties. Interacts with GRB2 in the presence of FYN.</text>
</comment>
<comment type="interaction">
    <interactant intactId="EBI-26499879">
        <id>A8K4G0</id>
    </interactant>
    <interactant intactId="EBI-10320732">
        <id>Q9UGN4</id>
        <label>CD300A</label>
    </interactant>
    <organismsDiffer>false</organismsDiffer>
    <experiments>2</experiments>
</comment>
<comment type="interaction">
    <interactant intactId="EBI-26499879">
        <id>A8K4G0</id>
    </interactant>
    <interactant intactId="EBI-3915344">
        <id>Q08708</id>
        <label>CD300C</label>
    </interactant>
    <organismsDiffer>false</organismsDiffer>
    <experiments>4</experiments>
</comment>
<comment type="interaction">
    <interactant intactId="EBI-26499879">
        <id>A8K4G0</id>
    </interactant>
    <interactant intactId="EBI-18010148">
        <id>Q496F6</id>
        <label>CD300E</label>
    </interactant>
    <organismsDiffer>false</organismsDiffer>
    <experiments>2</experiments>
</comment>
<comment type="interaction">
    <interactant intactId="EBI-26499879">
        <id>A8K4G0</id>
    </interactant>
    <interactant intactId="EBI-26499879">
        <id>A8K4G0</id>
        <label>CD300LB</label>
    </interactant>
    <organismsDiffer>false</organismsDiffer>
    <experiments>7</experiments>
</comment>
<comment type="interaction">
    <interactant intactId="EBI-26499879">
        <id>A8K4G0</id>
    </interactant>
    <interactant intactId="EBI-4314468">
        <id>Q6UXZ3</id>
        <label>CD300LD</label>
    </interactant>
    <organismsDiffer>false</organismsDiffer>
    <experiments>2</experiments>
</comment>
<comment type="interaction">
    <interactant intactId="EBI-26499879">
        <id>A8K4G0</id>
    </interactant>
    <interactant intactId="EBI-7381492">
        <id>Q8TDQ1</id>
        <label>CD300LF</label>
    </interactant>
    <organismsDiffer>false</organismsDiffer>
    <experiments>3</experiments>
</comment>
<comment type="subcellular location">
    <subcellularLocation>
        <location evidence="1">Cell membrane</location>
        <topology evidence="1">Single-pass type I membrane protein</topology>
    </subcellularLocation>
</comment>
<comment type="tissue specificity">
    <text evidence="4">Expressed exclusively in myeloid lineages.</text>
</comment>
<comment type="PTM">
    <text evidence="4 5">Phosphorylation on Tyr-188 by FYN is required for interaction with GRB2.</text>
</comment>
<comment type="similarity">
    <text evidence="6">Belongs to the CD300 family.</text>
</comment>
<comment type="sequence caution" evidence="6">
    <conflict type="erroneous initiation">
        <sequence resource="EMBL-CDS" id="AAH28091"/>
    </conflict>
    <text>Extended N-terminus.</text>
</comment>
<comment type="sequence caution" evidence="6">
    <conflict type="erroneous initiation">
        <sequence resource="EMBL-CDS" id="BAF83614"/>
    </conflict>
    <text>Extended N-terminus.</text>
</comment>
<comment type="sequence caution" evidence="6">
    <conflict type="erroneous initiation">
        <sequence resource="EMBL-CDS" id="EAW89170"/>
    </conflict>
    <text>Extended N-terminus.</text>
</comment>
<protein>
    <recommendedName>
        <fullName>CMRF35-like molecule 7</fullName>
        <shortName>CLM-7</shortName>
    </recommendedName>
    <alternativeName>
        <fullName>CD300 antigen-like family member B</fullName>
    </alternativeName>
    <alternativeName>
        <fullName>CMRF35-A2</fullName>
    </alternativeName>
    <alternativeName>
        <fullName>Immune receptor expressed on myeloid cells 3</fullName>
        <shortName>IREM-3</shortName>
    </alternativeName>
    <alternativeName>
        <fullName>Leukocyte mono-Ig-like receptor 5</fullName>
    </alternativeName>
    <alternativeName>
        <fullName>Triggering receptor expressed on myeloid cells 5</fullName>
        <shortName>TREM-5</shortName>
    </alternativeName>
    <cdAntigenName>CD300b</cdAntigenName>
</protein>
<organism>
    <name type="scientific">Homo sapiens</name>
    <name type="common">Human</name>
    <dbReference type="NCBI Taxonomy" id="9606"/>
    <lineage>
        <taxon>Eukaryota</taxon>
        <taxon>Metazoa</taxon>
        <taxon>Chordata</taxon>
        <taxon>Craniata</taxon>
        <taxon>Vertebrata</taxon>
        <taxon>Euteleostomi</taxon>
        <taxon>Mammalia</taxon>
        <taxon>Eutheria</taxon>
        <taxon>Euarchontoglires</taxon>
        <taxon>Primates</taxon>
        <taxon>Haplorrhini</taxon>
        <taxon>Catarrhini</taxon>
        <taxon>Hominidae</taxon>
        <taxon>Homo</taxon>
    </lineage>
</organism>
<proteinExistence type="evidence at protein level"/>
<accession>A8K4G0</accession>
<accession>Q1EG73</accession>
<accession>Q8IX40</accession>
<accession>Q8N6D1</accession>
<keyword id="KW-1003">Cell membrane</keyword>
<keyword id="KW-1015">Disulfide bond</keyword>
<keyword id="KW-0391">Immunity</keyword>
<keyword id="KW-0393">Immunoglobulin domain</keyword>
<keyword id="KW-0472">Membrane</keyword>
<keyword id="KW-0597">Phosphoprotein</keyword>
<keyword id="KW-1267">Proteomics identification</keyword>
<keyword id="KW-0675">Receptor</keyword>
<keyword id="KW-1185">Reference proteome</keyword>
<keyword id="KW-0732">Signal</keyword>
<keyword id="KW-0812">Transmembrane</keyword>
<keyword id="KW-1133">Transmembrane helix</keyword>
<feature type="signal peptide" evidence="2">
    <location>
        <begin position="1"/>
        <end position="17"/>
    </location>
</feature>
<feature type="chain" id="PRO_0000320130" description="CMRF35-like molecule 7">
    <location>
        <begin position="18"/>
        <end position="201"/>
    </location>
</feature>
<feature type="topological domain" description="Extracellular" evidence="2">
    <location>
        <begin position="18"/>
        <end position="151"/>
    </location>
</feature>
<feature type="transmembrane region" description="Helical" evidence="2">
    <location>
        <begin position="152"/>
        <end position="172"/>
    </location>
</feature>
<feature type="topological domain" description="Cytoplasmic" evidence="2">
    <location>
        <begin position="173"/>
        <end position="201"/>
    </location>
</feature>
<feature type="domain" description="Ig-like V-type">
    <location>
        <begin position="18"/>
        <end position="120"/>
    </location>
</feature>
<feature type="site" description="Interaction with TYROBP">
    <location>
        <position position="158"/>
    </location>
</feature>
<feature type="modified residue" description="Phosphotyrosine; by FYN" evidence="4 5">
    <location>
        <position position="188"/>
    </location>
</feature>
<feature type="disulfide bond" evidence="3">
    <location>
        <begin position="36"/>
        <end position="104"/>
    </location>
</feature>
<feature type="mutagenesis site" description="Abolishes interaction with TYROBP, and strongly reduces activation properties." evidence="4">
    <original>K</original>
    <variation>L</variation>
    <location>
        <position position="158"/>
    </location>
</feature>
<feature type="mutagenesis site" description="No effect on interaction with TYROBP, but strongly reduces activation properties." evidence="4">
    <original>Y</original>
    <variation>F</variation>
    <location>
        <position position="188"/>
    </location>
</feature>
<feature type="sequence conflict" description="In Ref. 1; AAV69612." evidence="6" ref="1">
    <original>G</original>
    <variation>R</variation>
    <location>
        <position position="144"/>
    </location>
</feature>
<gene>
    <name type="primary">CD300LB</name>
    <name type="synonym">CD300B</name>
    <name type="synonym">CLM7</name>
    <name type="synonym">CMRF35A2</name>
    <name type="synonym">IREM3</name>
    <name type="synonym">LMIR5</name>
    <name type="synonym">TREM5</name>
    <name type="ORF">UNQ2530/PRO6029</name>
</gene>
<name>CLM7_HUMAN</name>